<evidence type="ECO:0000250" key="1"/>
<evidence type="ECO:0000305" key="2"/>
<dbReference type="EC" id="2.7.7.19"/>
<dbReference type="EMBL" id="AY689436">
    <property type="protein sequence ID" value="ABI99196.1"/>
    <property type="molecule type" value="Genomic_DNA"/>
</dbReference>
<dbReference type="RefSeq" id="YP_227416.1">
    <property type="nucleotide sequence ID" value="NC_006966.1"/>
</dbReference>
<dbReference type="SMR" id="Q08FW1"/>
<dbReference type="GeneID" id="3346388"/>
<dbReference type="KEGG" id="vg:3346388"/>
<dbReference type="OrthoDB" id="3428at10239"/>
<dbReference type="Proteomes" id="UP000000866">
    <property type="component" value="Genome"/>
</dbReference>
<dbReference type="GO" id="GO:0005524">
    <property type="term" value="F:ATP binding"/>
    <property type="evidence" value="ECO:0007669"/>
    <property type="project" value="UniProtKB-KW"/>
</dbReference>
<dbReference type="GO" id="GO:1990817">
    <property type="term" value="F:poly(A) RNA polymerase activity"/>
    <property type="evidence" value="ECO:0007669"/>
    <property type="project" value="UniProtKB-EC"/>
</dbReference>
<dbReference type="GO" id="GO:0006397">
    <property type="term" value="P:mRNA processing"/>
    <property type="evidence" value="ECO:0007669"/>
    <property type="project" value="UniProtKB-KW"/>
</dbReference>
<dbReference type="CDD" id="cd20919">
    <property type="entry name" value="polyA_pol_Pox"/>
    <property type="match status" value="1"/>
</dbReference>
<dbReference type="Gene3D" id="1.20.1270.320">
    <property type="entry name" value="Poxvirus poly(A) polymerase, N domain"/>
    <property type="match status" value="1"/>
</dbReference>
<dbReference type="Gene3D" id="3.30.460.60">
    <property type="entry name" value="Poxvirus poly(A) polymerase, nucleotidyltransferase domain"/>
    <property type="match status" value="1"/>
</dbReference>
<dbReference type="InterPro" id="IPR004976">
    <property type="entry name" value="PolyA_pol_cat_Poxvir"/>
</dbReference>
<dbReference type="InterPro" id="IPR037265">
    <property type="entry name" value="PolyA_pol_cat_sf"/>
</dbReference>
<dbReference type="InterPro" id="IPR024231">
    <property type="entry name" value="PolyA_pol_nucTrfase_Poxvir"/>
</dbReference>
<dbReference type="InterPro" id="IPR038419">
    <property type="entry name" value="PolyA_pol_nucTrfase_sf_Poxvir"/>
</dbReference>
<dbReference type="InterPro" id="IPR024397">
    <property type="entry name" value="Poxvirus_polyA_pol_cat_C"/>
</dbReference>
<dbReference type="InterPro" id="IPR024398">
    <property type="entry name" value="Poxvirus_polyA_pol_cat_N"/>
</dbReference>
<dbReference type="InterPro" id="IPR038337">
    <property type="entry name" value="Poxvirus_polyA_pol_cat_N_sf"/>
</dbReference>
<dbReference type="Pfam" id="PF03296">
    <property type="entry name" value="Pox_polyA_pol"/>
    <property type="match status" value="1"/>
</dbReference>
<dbReference type="Pfam" id="PF12629">
    <property type="entry name" value="Pox_polyA_pol_C"/>
    <property type="match status" value="1"/>
</dbReference>
<dbReference type="Pfam" id="PF12630">
    <property type="entry name" value="Pox_polyA_pol_N"/>
    <property type="match status" value="1"/>
</dbReference>
<dbReference type="PIRSF" id="PIRSF015693">
    <property type="entry name" value="VAC-48L_nuct"/>
    <property type="match status" value="1"/>
</dbReference>
<dbReference type="SUPFAM" id="SSF160957">
    <property type="entry name" value="Poly(A) polymerase catalytic subunit-like"/>
    <property type="match status" value="1"/>
</dbReference>
<keyword id="KW-0067">ATP-binding</keyword>
<keyword id="KW-0507">mRNA processing</keyword>
<keyword id="KW-0547">Nucleotide-binding</keyword>
<keyword id="KW-1185">Reference proteome</keyword>
<keyword id="KW-0804">Transcription</keyword>
<keyword id="KW-0808">Transferase</keyword>
<name>PAP1_DPV83</name>
<sequence length="470" mass="54186">MNRHISEILEKYLGRIPSLTEYHTLKSQYKNIHRVNIFNKDIFISLIKKNKKKFFSDIDTSVSEIKKLVFDYFTKQEQTYSIGKLYTIIELQTILVTTYTDILGVLTTKGPDIFSSNVQYNTSSMQKIANDALNSMNIATISDKVMGRHNVSSLVCNVNSLMEEYLRRHNKSCICYGSYSLHLLNPEIKYGDIDILQTNSRTFLIDLAFLIKFITGYNVILLKVPYLKNYMVLKDQNDSHIIDSFNIRQETMQHIPKILIDNIYIVDPTIQLLSMLKMLSQIDRLEDLAKNPDKLTIRFATLLEYVRNKYGIILNGNSNNMPMPSTIDIKKRIITVDTKYYNFAYDKCYVYLDENSLSSDILSLNADDAVDFENVSNSAFLVNDKTLYTYFSNTILLSGNDKIHEISSRGISAHILIYQALMKYDISIPLTDIVNSLIGRNKQPIYEIIPRDKKTGKHGIIDIEKDIITH</sequence>
<organism>
    <name type="scientific">Deerpox virus (strain Mule deer/United States/W-848-83/1983)</name>
    <name type="common">DPV</name>
    <dbReference type="NCBI Taxonomy" id="305674"/>
    <lineage>
        <taxon>Viruses</taxon>
        <taxon>Varidnaviria</taxon>
        <taxon>Bamfordvirae</taxon>
        <taxon>Nucleocytoviricota</taxon>
        <taxon>Pokkesviricetes</taxon>
        <taxon>Chitovirales</taxon>
        <taxon>Poxviridae</taxon>
        <taxon>Chordopoxvirinae</taxon>
        <taxon>Cervidpoxvirus</taxon>
        <taxon>Mule deerpox virus</taxon>
    </lineage>
</organism>
<comment type="function">
    <text>Polymerase that creates the 3'-poly(A) tail of mRNA's.</text>
</comment>
<comment type="catalytic activity">
    <reaction>
        <text>RNA(n) + ATP = RNA(n)-3'-adenine ribonucleotide + diphosphate</text>
        <dbReference type="Rhea" id="RHEA:11332"/>
        <dbReference type="Rhea" id="RHEA-COMP:14527"/>
        <dbReference type="Rhea" id="RHEA-COMP:17347"/>
        <dbReference type="ChEBI" id="CHEBI:30616"/>
        <dbReference type="ChEBI" id="CHEBI:33019"/>
        <dbReference type="ChEBI" id="CHEBI:140395"/>
        <dbReference type="ChEBI" id="CHEBI:173115"/>
        <dbReference type="EC" id="2.7.7.19"/>
    </reaction>
</comment>
<comment type="subunit">
    <text evidence="1">Heterodimer of a large (catalytic) subunit and a small (regulatory) subunit.</text>
</comment>
<comment type="similarity">
    <text evidence="2">Belongs to the poxviridae poly(A) polymerase catalytic subunit family.</text>
</comment>
<protein>
    <recommendedName>
        <fullName>Poly(A) polymerase catalytic subunit</fullName>
        <ecNumber>2.7.7.19</ecNumber>
    </recommendedName>
    <alternativeName>
        <fullName>Poly(A) polymerase large subunit</fullName>
        <shortName>PAP-L</shortName>
    </alternativeName>
</protein>
<organismHost>
    <name type="scientific">Odocoileus hemionus</name>
    <name type="common">Mule deer</name>
    <name type="synonym">Cervus hemionus</name>
    <dbReference type="NCBI Taxonomy" id="9872"/>
</organismHost>
<reference key="1">
    <citation type="journal article" date="2005" name="J. Virol.">
        <title>Genome of deerpox virus.</title>
        <authorList>
            <person name="Afonso C.L."/>
            <person name="Delhon G."/>
            <person name="Tulman E.R."/>
            <person name="Lu Z."/>
            <person name="Zsak A."/>
            <person name="Becerra V.M."/>
            <person name="Zsak L."/>
            <person name="Kutish G.F."/>
            <person name="Rock D.L."/>
        </authorList>
    </citation>
    <scope>NUCLEOTIDE SEQUENCE [LARGE SCALE GENOMIC DNA]</scope>
</reference>
<feature type="chain" id="PRO_0000308931" description="Poly(A) polymerase catalytic subunit">
    <location>
        <begin position="1"/>
        <end position="470"/>
    </location>
</feature>
<feature type="active site" evidence="1">
    <location>
        <position position="192"/>
    </location>
</feature>
<feature type="active site" evidence="1">
    <location>
        <position position="194"/>
    </location>
</feature>
<proteinExistence type="inferred from homology"/>
<gene>
    <name type="primary">PAPL</name>
    <name type="ordered locus">DpV83gp040</name>
</gene>
<accession>Q08FW1</accession>